<sequence length="174" mass="19079">MGLLSQRKWTLSGSQQTGCVALTVPSFPWVASRMHYGRKQVSWIIFLKIGAGCQVHVGHDCSTLRRQQGAPWSFASSFRPAASPLAPPSPGVSGLFPPHERWSGGSQTRCGKCVKMQILGSTLKLFRHPPSQVTRLWGRHHLKTPAPFLQSPGIQLNPGKVPASLLRLATWKPL</sequence>
<evidence type="ECO:0000269" key="1">
    <source>
    </source>
</evidence>
<evidence type="ECO:0000303" key="2">
    <source>
    </source>
</evidence>
<organism>
    <name type="scientific">Homo sapiens</name>
    <name type="common">Human</name>
    <dbReference type="NCBI Taxonomy" id="9606"/>
    <lineage>
        <taxon>Eukaryota</taxon>
        <taxon>Metazoa</taxon>
        <taxon>Chordata</taxon>
        <taxon>Craniata</taxon>
        <taxon>Vertebrata</taxon>
        <taxon>Euteleostomi</taxon>
        <taxon>Mammalia</taxon>
        <taxon>Eutheria</taxon>
        <taxon>Euarchontoglires</taxon>
        <taxon>Primates</taxon>
        <taxon>Haplorrhini</taxon>
        <taxon>Catarrhini</taxon>
        <taxon>Hominidae</taxon>
        <taxon>Homo</taxon>
    </lineage>
</organism>
<accession>Q8N2B8</accession>
<accession>Q2NKN5</accession>
<dbReference type="EMBL" id="AK090853">
    <property type="protein sequence ID" value="BAC03531.1"/>
    <property type="molecule type" value="mRNA"/>
</dbReference>
<dbReference type="EMBL" id="CH471053">
    <property type="protein sequence ID" value="EAX00945.1"/>
    <property type="molecule type" value="Genomic_DNA"/>
</dbReference>
<dbReference type="EMBL" id="BC111723">
    <property type="protein sequence ID" value="AAI11724.1"/>
    <property type="molecule type" value="mRNA"/>
</dbReference>
<dbReference type="IntAct" id="Q8N2B8">
    <property type="interactions" value="1"/>
</dbReference>
<dbReference type="iPTMnet" id="Q8N2B8"/>
<dbReference type="PhosphoSitePlus" id="Q8N2B8"/>
<dbReference type="BioMuta" id="-"/>
<dbReference type="neXtProt" id="NX_Q8N2B8"/>
<dbReference type="InParanoid" id="Q8N2B8"/>
<dbReference type="PAN-GO" id="Q8N2B8">
    <property type="GO annotations" value="0 GO annotations based on evolutionary models"/>
</dbReference>
<dbReference type="PathwayCommons" id="Q8N2B8"/>
<dbReference type="Pharos" id="Q8N2B8">
    <property type="development level" value="Tdark"/>
</dbReference>
<dbReference type="Proteomes" id="UP000005640">
    <property type="component" value="Unplaced"/>
</dbReference>
<dbReference type="RNAct" id="Q8N2B8">
    <property type="molecule type" value="protein"/>
</dbReference>
<reference key="1">
    <citation type="journal article" date="2004" name="Nat. Genet.">
        <title>Complete sequencing and characterization of 21,243 full-length human cDNAs.</title>
        <authorList>
            <person name="Ota T."/>
            <person name="Suzuki Y."/>
            <person name="Nishikawa T."/>
            <person name="Otsuki T."/>
            <person name="Sugiyama T."/>
            <person name="Irie R."/>
            <person name="Wakamatsu A."/>
            <person name="Hayashi K."/>
            <person name="Sato H."/>
            <person name="Nagai K."/>
            <person name="Kimura K."/>
            <person name="Makita H."/>
            <person name="Sekine M."/>
            <person name="Obayashi M."/>
            <person name="Nishi T."/>
            <person name="Shibahara T."/>
            <person name="Tanaka T."/>
            <person name="Ishii S."/>
            <person name="Yamamoto J."/>
            <person name="Saito K."/>
            <person name="Kawai Y."/>
            <person name="Isono Y."/>
            <person name="Nakamura Y."/>
            <person name="Nagahari K."/>
            <person name="Murakami K."/>
            <person name="Yasuda T."/>
            <person name="Iwayanagi T."/>
            <person name="Wagatsuma M."/>
            <person name="Shiratori A."/>
            <person name="Sudo H."/>
            <person name="Hosoiri T."/>
            <person name="Kaku Y."/>
            <person name="Kodaira H."/>
            <person name="Kondo H."/>
            <person name="Sugawara M."/>
            <person name="Takahashi M."/>
            <person name="Kanda K."/>
            <person name="Yokoi T."/>
            <person name="Furuya T."/>
            <person name="Kikkawa E."/>
            <person name="Omura Y."/>
            <person name="Abe K."/>
            <person name="Kamihara K."/>
            <person name="Katsuta N."/>
            <person name="Sato K."/>
            <person name="Tanikawa M."/>
            <person name="Yamazaki M."/>
            <person name="Ninomiya K."/>
            <person name="Ishibashi T."/>
            <person name="Yamashita H."/>
            <person name="Murakawa K."/>
            <person name="Fujimori K."/>
            <person name="Tanai H."/>
            <person name="Kimata M."/>
            <person name="Watanabe M."/>
            <person name="Hiraoka S."/>
            <person name="Chiba Y."/>
            <person name="Ishida S."/>
            <person name="Ono Y."/>
            <person name="Takiguchi S."/>
            <person name="Watanabe S."/>
            <person name="Yosida M."/>
            <person name="Hotuta T."/>
            <person name="Kusano J."/>
            <person name="Kanehori K."/>
            <person name="Takahashi-Fujii A."/>
            <person name="Hara H."/>
            <person name="Tanase T.-O."/>
            <person name="Nomura Y."/>
            <person name="Togiya S."/>
            <person name="Komai F."/>
            <person name="Hara R."/>
            <person name="Takeuchi K."/>
            <person name="Arita M."/>
            <person name="Imose N."/>
            <person name="Musashino K."/>
            <person name="Yuuki H."/>
            <person name="Oshima A."/>
            <person name="Sasaki N."/>
            <person name="Aotsuka S."/>
            <person name="Yoshikawa Y."/>
            <person name="Matsunawa H."/>
            <person name="Ichihara T."/>
            <person name="Shiohata N."/>
            <person name="Sano S."/>
            <person name="Moriya S."/>
            <person name="Momiyama H."/>
            <person name="Satoh N."/>
            <person name="Takami S."/>
            <person name="Terashima Y."/>
            <person name="Suzuki O."/>
            <person name="Nakagawa S."/>
            <person name="Senoh A."/>
            <person name="Mizoguchi H."/>
            <person name="Goto Y."/>
            <person name="Shimizu F."/>
            <person name="Wakebe H."/>
            <person name="Hishigaki H."/>
            <person name="Watanabe T."/>
            <person name="Sugiyama A."/>
            <person name="Takemoto M."/>
            <person name="Kawakami B."/>
            <person name="Yamazaki M."/>
            <person name="Watanabe K."/>
            <person name="Kumagai A."/>
            <person name="Itakura S."/>
            <person name="Fukuzumi Y."/>
            <person name="Fujimori Y."/>
            <person name="Komiyama M."/>
            <person name="Tashiro H."/>
            <person name="Tanigami A."/>
            <person name="Fujiwara T."/>
            <person name="Ono T."/>
            <person name="Yamada K."/>
            <person name="Fujii Y."/>
            <person name="Ozaki K."/>
            <person name="Hirao M."/>
            <person name="Ohmori Y."/>
            <person name="Kawabata A."/>
            <person name="Hikiji T."/>
            <person name="Kobatake N."/>
            <person name="Inagaki H."/>
            <person name="Ikema Y."/>
            <person name="Okamoto S."/>
            <person name="Okitani R."/>
            <person name="Kawakami T."/>
            <person name="Noguchi S."/>
            <person name="Itoh T."/>
            <person name="Shigeta K."/>
            <person name="Senba T."/>
            <person name="Matsumura K."/>
            <person name="Nakajima Y."/>
            <person name="Mizuno T."/>
            <person name="Morinaga M."/>
            <person name="Sasaki M."/>
            <person name="Togashi T."/>
            <person name="Oyama M."/>
            <person name="Hata H."/>
            <person name="Watanabe M."/>
            <person name="Komatsu T."/>
            <person name="Mizushima-Sugano J."/>
            <person name="Satoh T."/>
            <person name="Shirai Y."/>
            <person name="Takahashi Y."/>
            <person name="Nakagawa K."/>
            <person name="Okumura K."/>
            <person name="Nagase T."/>
            <person name="Nomura N."/>
            <person name="Kikuchi H."/>
            <person name="Masuho Y."/>
            <person name="Yamashita R."/>
            <person name="Nakai K."/>
            <person name="Yada T."/>
            <person name="Nakamura Y."/>
            <person name="Ohara O."/>
            <person name="Isogai T."/>
            <person name="Sugano S."/>
        </authorList>
    </citation>
    <scope>NUCLEOTIDE SEQUENCE [LARGE SCALE MRNA] (ISOFORM 1)</scope>
    <source>
        <tissue>Amygdala</tissue>
    </source>
</reference>
<reference key="2">
    <citation type="submission" date="2005-09" db="EMBL/GenBank/DDBJ databases">
        <authorList>
            <person name="Mural R.J."/>
            <person name="Istrail S."/>
            <person name="Sutton G.G."/>
            <person name="Florea L."/>
            <person name="Halpern A.L."/>
            <person name="Mobarry C.M."/>
            <person name="Lippert R."/>
            <person name="Walenz B."/>
            <person name="Shatkay H."/>
            <person name="Dew I."/>
            <person name="Miller J.R."/>
            <person name="Flanigan M.J."/>
            <person name="Edwards N.J."/>
            <person name="Bolanos R."/>
            <person name="Fasulo D."/>
            <person name="Halldorsson B.V."/>
            <person name="Hannenhalli S."/>
            <person name="Turner R."/>
            <person name="Yooseph S."/>
            <person name="Lu F."/>
            <person name="Nusskern D.R."/>
            <person name="Shue B.C."/>
            <person name="Zheng X.H."/>
            <person name="Zhong F."/>
            <person name="Delcher A.L."/>
            <person name="Huson D.H."/>
            <person name="Kravitz S.A."/>
            <person name="Mouchard L."/>
            <person name="Reinert K."/>
            <person name="Remington K.A."/>
            <person name="Clark A.G."/>
            <person name="Waterman M.S."/>
            <person name="Eichler E.E."/>
            <person name="Adams M.D."/>
            <person name="Hunkapiller M.W."/>
            <person name="Myers E.W."/>
            <person name="Venter J.C."/>
        </authorList>
    </citation>
    <scope>NUCLEOTIDE SEQUENCE [LARGE SCALE GENOMIC DNA]</scope>
</reference>
<reference key="3">
    <citation type="journal article" date="2004" name="Genome Res.">
        <title>The status, quality, and expansion of the NIH full-length cDNA project: the Mammalian Gene Collection (MGC).</title>
        <authorList>
            <consortium name="The MGC Project Team"/>
        </authorList>
    </citation>
    <scope>NUCLEOTIDE SEQUENCE [LARGE SCALE MRNA] (ISOFORM 2)</scope>
</reference>
<reference key="4">
    <citation type="journal article" date="2006" name="Science">
        <title>The consensus coding sequences of human breast and colorectal cancers.</title>
        <authorList>
            <person name="Sjoeblom T."/>
            <person name="Jones S."/>
            <person name="Wood L.D."/>
            <person name="Parsons D.W."/>
            <person name="Lin J."/>
            <person name="Barber T.D."/>
            <person name="Mandelker D."/>
            <person name="Leary R.J."/>
            <person name="Ptak J."/>
            <person name="Silliman N."/>
            <person name="Szabo S."/>
            <person name="Buckhaults P."/>
            <person name="Farrell C."/>
            <person name="Meeh P."/>
            <person name="Markowitz S.D."/>
            <person name="Willis J."/>
            <person name="Dawson D."/>
            <person name="Willson J.K.V."/>
            <person name="Gazdar A.F."/>
            <person name="Hartigan J."/>
            <person name="Wu L."/>
            <person name="Liu C."/>
            <person name="Parmigiani G."/>
            <person name="Park B.H."/>
            <person name="Bachman K.E."/>
            <person name="Papadopoulos N."/>
            <person name="Vogelstein B."/>
            <person name="Kinzler K.W."/>
            <person name="Velculescu V.E."/>
        </authorList>
    </citation>
    <scope>VARIANT [LARGE SCALE ANALYSIS] GLN-127</scope>
</reference>
<keyword id="KW-0025">Alternative splicing</keyword>
<keyword id="KW-1185">Reference proteome</keyword>
<feature type="chain" id="PRO_0000339299" description="Putative uncharacterized protein FLJ33534">
    <location>
        <begin position="1"/>
        <end position="174"/>
    </location>
</feature>
<feature type="splice variant" id="VSP_034139" description="In isoform 2." evidence="2">
    <original>GLFPPHERWSGGSQTRCGKCVKMQILGSTLKLFRHPPSQVTRLWGRHHLKTPAPFLQSPGIQLNPGKVPASLLRLATWKPL</original>
    <variation>AAALWLCLFCALRVLG</variation>
    <location>
        <begin position="94"/>
        <end position="174"/>
    </location>
</feature>
<feature type="sequence variant" id="VAR_043938" description="In a colorectal cancer sample; somatic mutation." evidence="1">
    <original>R</original>
    <variation>Q</variation>
    <location>
        <position position="127"/>
    </location>
</feature>
<comment type="alternative products">
    <event type="alternative splicing"/>
    <isoform>
        <id>Q8N2B8-1</id>
        <name>1</name>
        <sequence type="displayed"/>
    </isoform>
    <isoform>
        <id>Q8N2B8-2</id>
        <name>2</name>
        <sequence type="described" ref="VSP_034139"/>
    </isoform>
</comment>
<name>YB035_HUMAN</name>
<proteinExistence type="evidence at transcript level"/>
<protein>
    <recommendedName>
        <fullName>Putative uncharacterized protein FLJ33534</fullName>
    </recommendedName>
</protein>